<reference key="1">
    <citation type="journal article" date="2006" name="PLoS Genet.">
        <title>Secrets of soil survival revealed by the genome sequence of Arthrobacter aurescens TC1.</title>
        <authorList>
            <person name="Mongodin E.F."/>
            <person name="Shapir N."/>
            <person name="Daugherty S.C."/>
            <person name="DeBoy R.T."/>
            <person name="Emerson J.B."/>
            <person name="Shvartzbeyn A."/>
            <person name="Radune D."/>
            <person name="Vamathevan J."/>
            <person name="Riggs F."/>
            <person name="Grinberg V."/>
            <person name="Khouri H.M."/>
            <person name="Wackett L.P."/>
            <person name="Nelson K.E."/>
            <person name="Sadowsky M.J."/>
        </authorList>
    </citation>
    <scope>NUCLEOTIDE SEQUENCE [LARGE SCALE GENOMIC DNA]</scope>
    <source>
        <strain>TC1</strain>
    </source>
</reference>
<gene>
    <name evidence="1" type="primary">rsmG</name>
    <name type="ordered locus">AAur_4205</name>
</gene>
<comment type="function">
    <text evidence="1">Specifically methylates the N7 position of guanine in position 518 of 16S rRNA.</text>
</comment>
<comment type="subcellular location">
    <subcellularLocation>
        <location evidence="1">Cytoplasm</location>
    </subcellularLocation>
</comment>
<comment type="similarity">
    <text evidence="1">Belongs to the methyltransferase superfamily. RNA methyltransferase RsmG family.</text>
</comment>
<organism>
    <name type="scientific">Paenarthrobacter aurescens (strain TC1)</name>
    <dbReference type="NCBI Taxonomy" id="290340"/>
    <lineage>
        <taxon>Bacteria</taxon>
        <taxon>Bacillati</taxon>
        <taxon>Actinomycetota</taxon>
        <taxon>Actinomycetes</taxon>
        <taxon>Micrococcales</taxon>
        <taxon>Micrococcaceae</taxon>
        <taxon>Paenarthrobacter</taxon>
    </lineage>
</organism>
<name>RSMG_PAEAT</name>
<accession>A1RCA8</accession>
<feature type="chain" id="PRO_1000010117" description="Ribosomal RNA small subunit methyltransferase G">
    <location>
        <begin position="1"/>
        <end position="216"/>
    </location>
</feature>
<feature type="binding site" evidence="1">
    <location>
        <position position="73"/>
    </location>
    <ligand>
        <name>S-adenosyl-L-methionine</name>
        <dbReference type="ChEBI" id="CHEBI:59789"/>
    </ligand>
</feature>
<feature type="binding site" evidence="1">
    <location>
        <position position="78"/>
    </location>
    <ligand>
        <name>S-adenosyl-L-methionine</name>
        <dbReference type="ChEBI" id="CHEBI:59789"/>
    </ligand>
</feature>
<feature type="binding site" evidence="1">
    <location>
        <begin position="124"/>
        <end position="125"/>
    </location>
    <ligand>
        <name>S-adenosyl-L-methionine</name>
        <dbReference type="ChEBI" id="CHEBI:59789"/>
    </ligand>
</feature>
<feature type="binding site" evidence="1">
    <location>
        <position position="139"/>
    </location>
    <ligand>
        <name>S-adenosyl-L-methionine</name>
        <dbReference type="ChEBI" id="CHEBI:59789"/>
    </ligand>
</feature>
<proteinExistence type="inferred from homology"/>
<protein>
    <recommendedName>
        <fullName evidence="1">Ribosomal RNA small subunit methyltransferase G</fullName>
        <ecNumber evidence="1">2.1.1.-</ecNumber>
    </recommendedName>
    <alternativeName>
        <fullName evidence="1">16S rRNA 7-methylguanosine methyltransferase</fullName>
        <shortName evidence="1">16S rRNA m7G methyltransferase</shortName>
    </alternativeName>
</protein>
<dbReference type="EC" id="2.1.1.-" evidence="1"/>
<dbReference type="EMBL" id="CP000474">
    <property type="protein sequence ID" value="ABM09612.1"/>
    <property type="molecule type" value="Genomic_DNA"/>
</dbReference>
<dbReference type="RefSeq" id="WP_011776793.1">
    <property type="nucleotide sequence ID" value="NC_008711.1"/>
</dbReference>
<dbReference type="SMR" id="A1RCA8"/>
<dbReference type="STRING" id="290340.AAur_4205"/>
<dbReference type="KEGG" id="aau:AAur_4205"/>
<dbReference type="eggNOG" id="COG0357">
    <property type="taxonomic scope" value="Bacteria"/>
</dbReference>
<dbReference type="HOGENOM" id="CLU_065341_5_0_11"/>
<dbReference type="OrthoDB" id="9808773at2"/>
<dbReference type="Proteomes" id="UP000000637">
    <property type="component" value="Chromosome"/>
</dbReference>
<dbReference type="GO" id="GO:0005829">
    <property type="term" value="C:cytosol"/>
    <property type="evidence" value="ECO:0007669"/>
    <property type="project" value="TreeGrafter"/>
</dbReference>
<dbReference type="GO" id="GO:0070043">
    <property type="term" value="F:rRNA (guanine-N7-)-methyltransferase activity"/>
    <property type="evidence" value="ECO:0007669"/>
    <property type="project" value="UniProtKB-UniRule"/>
</dbReference>
<dbReference type="Gene3D" id="3.40.50.150">
    <property type="entry name" value="Vaccinia Virus protein VP39"/>
    <property type="match status" value="1"/>
</dbReference>
<dbReference type="HAMAP" id="MF_00074">
    <property type="entry name" value="16SrRNA_methyltr_G"/>
    <property type="match status" value="1"/>
</dbReference>
<dbReference type="InterPro" id="IPR003682">
    <property type="entry name" value="rRNA_ssu_MeTfrase_G"/>
</dbReference>
<dbReference type="InterPro" id="IPR029063">
    <property type="entry name" value="SAM-dependent_MTases_sf"/>
</dbReference>
<dbReference type="NCBIfam" id="TIGR00138">
    <property type="entry name" value="rsmG_gidB"/>
    <property type="match status" value="1"/>
</dbReference>
<dbReference type="PANTHER" id="PTHR31760">
    <property type="entry name" value="S-ADENOSYL-L-METHIONINE-DEPENDENT METHYLTRANSFERASES SUPERFAMILY PROTEIN"/>
    <property type="match status" value="1"/>
</dbReference>
<dbReference type="PANTHER" id="PTHR31760:SF0">
    <property type="entry name" value="S-ADENOSYL-L-METHIONINE-DEPENDENT METHYLTRANSFERASES SUPERFAMILY PROTEIN"/>
    <property type="match status" value="1"/>
</dbReference>
<dbReference type="Pfam" id="PF02527">
    <property type="entry name" value="GidB"/>
    <property type="match status" value="1"/>
</dbReference>
<dbReference type="SUPFAM" id="SSF53335">
    <property type="entry name" value="S-adenosyl-L-methionine-dependent methyltransferases"/>
    <property type="match status" value="1"/>
</dbReference>
<evidence type="ECO:0000255" key="1">
    <source>
        <dbReference type="HAMAP-Rule" id="MF_00074"/>
    </source>
</evidence>
<keyword id="KW-0963">Cytoplasm</keyword>
<keyword id="KW-0489">Methyltransferase</keyword>
<keyword id="KW-0698">rRNA processing</keyword>
<keyword id="KW-0949">S-adenosyl-L-methionine</keyword>
<keyword id="KW-0808">Transferase</keyword>
<sequence>MVEITAAELEAAEKIFGERLDLAKRYVEHLATSGTERGLIGPREIPRLWSRHVLNCAVIESAIAMDSHVADVGSGAGLPGLCLAIARPDLELTLIEPLERRVIWLQEVVDDLGLDNVTIMRTRAELAVGMVDADVVTARAVSALSNLAGLTIPLLNGHGEVVAIKGRSAAEEIEKAKKVIRKLGGVETSVVVCGQELLEEPTTVVRIIVNKPGKTA</sequence>